<reference key="1">
    <citation type="journal article" date="2007" name="PLoS ONE">
        <title>Paradoxical DNA repair and peroxide resistance gene conservation in Bacillus pumilus SAFR-032.</title>
        <authorList>
            <person name="Gioia J."/>
            <person name="Yerrapragada S."/>
            <person name="Qin X."/>
            <person name="Jiang H."/>
            <person name="Igboeli O.C."/>
            <person name="Muzny D."/>
            <person name="Dugan-Rocha S."/>
            <person name="Ding Y."/>
            <person name="Hawes A."/>
            <person name="Liu W."/>
            <person name="Perez L."/>
            <person name="Kovar C."/>
            <person name="Dinh H."/>
            <person name="Lee S."/>
            <person name="Nazareth L."/>
            <person name="Blyth P."/>
            <person name="Holder M."/>
            <person name="Buhay C."/>
            <person name="Tirumalai M.R."/>
            <person name="Liu Y."/>
            <person name="Dasgupta I."/>
            <person name="Bokhetache L."/>
            <person name="Fujita M."/>
            <person name="Karouia F."/>
            <person name="Eswara Moorthy P."/>
            <person name="Siefert J."/>
            <person name="Uzman A."/>
            <person name="Buzumbo P."/>
            <person name="Verma A."/>
            <person name="Zwiya H."/>
            <person name="McWilliams B.D."/>
            <person name="Olowu A."/>
            <person name="Clinkenbeard K.D."/>
            <person name="Newcombe D."/>
            <person name="Golebiewski L."/>
            <person name="Petrosino J.F."/>
            <person name="Nicholson W.L."/>
            <person name="Fox G.E."/>
            <person name="Venkateswaran K."/>
            <person name="Highlander S.K."/>
            <person name="Weinstock G.M."/>
        </authorList>
    </citation>
    <scope>NUCLEOTIDE SEQUENCE [LARGE SCALE GENOMIC DNA]</scope>
    <source>
        <strain>SAFR-032</strain>
    </source>
</reference>
<name>MOAC_BACP2</name>
<comment type="function">
    <text evidence="1">Catalyzes the conversion of (8S)-3',8-cyclo-7,8-dihydroguanosine 5'-triphosphate to cyclic pyranopterin monophosphate (cPMP).</text>
</comment>
<comment type="catalytic activity">
    <reaction evidence="1">
        <text>(8S)-3',8-cyclo-7,8-dihydroguanosine 5'-triphosphate = cyclic pyranopterin phosphate + diphosphate</text>
        <dbReference type="Rhea" id="RHEA:49580"/>
        <dbReference type="ChEBI" id="CHEBI:33019"/>
        <dbReference type="ChEBI" id="CHEBI:59648"/>
        <dbReference type="ChEBI" id="CHEBI:131766"/>
        <dbReference type="EC" id="4.6.1.17"/>
    </reaction>
</comment>
<comment type="pathway">
    <text evidence="1">Cofactor biosynthesis; molybdopterin biosynthesis.</text>
</comment>
<comment type="subunit">
    <text evidence="1">Homohexamer; trimer of dimers.</text>
</comment>
<comment type="similarity">
    <text evidence="1">Belongs to the MoaC family.</text>
</comment>
<keyword id="KW-0456">Lyase</keyword>
<keyword id="KW-0501">Molybdenum cofactor biosynthesis</keyword>
<sequence length="163" mass="17663">MSQFSHFNEQGRAKMVDISDKSSTMRTAVAASSVRMIKEVFHKIEQREIGKGDVLSVAQVAGIMAAKQTSTIIPMCHPLALKGVDISFDWEEDGNAHILNIQVQVKTKGSTGVEMEALTSASVCALTVYDMCKAIDKGMIIGPTYLIEKTGGKNGDFHRASDI</sequence>
<accession>A8FAF5</accession>
<gene>
    <name evidence="1" type="primary">moaC</name>
    <name type="ordered locus">BPUM_0527</name>
</gene>
<proteinExistence type="inferred from homology"/>
<organism>
    <name type="scientific">Bacillus pumilus (strain SAFR-032)</name>
    <dbReference type="NCBI Taxonomy" id="315750"/>
    <lineage>
        <taxon>Bacteria</taxon>
        <taxon>Bacillati</taxon>
        <taxon>Bacillota</taxon>
        <taxon>Bacilli</taxon>
        <taxon>Bacillales</taxon>
        <taxon>Bacillaceae</taxon>
        <taxon>Bacillus</taxon>
    </lineage>
</organism>
<dbReference type="EC" id="4.6.1.17" evidence="1"/>
<dbReference type="EMBL" id="CP000813">
    <property type="protein sequence ID" value="ABV61222.1"/>
    <property type="molecule type" value="Genomic_DNA"/>
</dbReference>
<dbReference type="RefSeq" id="WP_012009075.1">
    <property type="nucleotide sequence ID" value="NZ_VEIC01000036.1"/>
</dbReference>
<dbReference type="SMR" id="A8FAF5"/>
<dbReference type="STRING" id="315750.BPUM_0527"/>
<dbReference type="GeneID" id="5619775"/>
<dbReference type="KEGG" id="bpu:BPUM_0527"/>
<dbReference type="eggNOG" id="COG0315">
    <property type="taxonomic scope" value="Bacteria"/>
</dbReference>
<dbReference type="HOGENOM" id="CLU_074693_1_1_9"/>
<dbReference type="OrthoDB" id="9794429at2"/>
<dbReference type="UniPathway" id="UPA00344"/>
<dbReference type="Proteomes" id="UP000001355">
    <property type="component" value="Chromosome"/>
</dbReference>
<dbReference type="GO" id="GO:0061799">
    <property type="term" value="F:cyclic pyranopterin monophosphate synthase activity"/>
    <property type="evidence" value="ECO:0007669"/>
    <property type="project" value="UniProtKB-UniRule"/>
</dbReference>
<dbReference type="GO" id="GO:0006777">
    <property type="term" value="P:Mo-molybdopterin cofactor biosynthetic process"/>
    <property type="evidence" value="ECO:0007669"/>
    <property type="project" value="UniProtKB-UniRule"/>
</dbReference>
<dbReference type="CDD" id="cd01420">
    <property type="entry name" value="MoaC_PE"/>
    <property type="match status" value="1"/>
</dbReference>
<dbReference type="Gene3D" id="3.30.70.640">
    <property type="entry name" value="Molybdopterin cofactor biosynthesis C (MoaC) domain"/>
    <property type="match status" value="1"/>
</dbReference>
<dbReference type="HAMAP" id="MF_01224_B">
    <property type="entry name" value="MoaC_B"/>
    <property type="match status" value="1"/>
</dbReference>
<dbReference type="InterPro" id="IPR023045">
    <property type="entry name" value="MoaC"/>
</dbReference>
<dbReference type="InterPro" id="IPR047594">
    <property type="entry name" value="MoaC_bact/euk"/>
</dbReference>
<dbReference type="InterPro" id="IPR036522">
    <property type="entry name" value="MoaC_sf"/>
</dbReference>
<dbReference type="InterPro" id="IPR050105">
    <property type="entry name" value="MoCo_biosynth_MoaA/MoaC"/>
</dbReference>
<dbReference type="InterPro" id="IPR002820">
    <property type="entry name" value="Mopterin_CF_biosynth-C_dom"/>
</dbReference>
<dbReference type="NCBIfam" id="TIGR00581">
    <property type="entry name" value="moaC"/>
    <property type="match status" value="1"/>
</dbReference>
<dbReference type="NCBIfam" id="NF006870">
    <property type="entry name" value="PRK09364.1"/>
    <property type="match status" value="1"/>
</dbReference>
<dbReference type="PANTHER" id="PTHR22960:SF29">
    <property type="entry name" value="CYCLIC PYRANOPTERIN MONOPHOSPHATE SYNTHASE"/>
    <property type="match status" value="1"/>
</dbReference>
<dbReference type="PANTHER" id="PTHR22960">
    <property type="entry name" value="MOLYBDOPTERIN COFACTOR SYNTHESIS PROTEIN A"/>
    <property type="match status" value="1"/>
</dbReference>
<dbReference type="Pfam" id="PF01967">
    <property type="entry name" value="MoaC"/>
    <property type="match status" value="1"/>
</dbReference>
<dbReference type="SUPFAM" id="SSF55040">
    <property type="entry name" value="Molybdenum cofactor biosynthesis protein C, MoaC"/>
    <property type="match status" value="1"/>
</dbReference>
<feature type="chain" id="PRO_1000066797" description="Cyclic pyranopterin monophosphate synthase">
    <location>
        <begin position="1"/>
        <end position="163"/>
    </location>
</feature>
<feature type="active site" evidence="1">
    <location>
        <position position="130"/>
    </location>
</feature>
<feature type="binding site" evidence="1">
    <location>
        <begin position="75"/>
        <end position="77"/>
    </location>
    <ligand>
        <name>substrate</name>
    </ligand>
</feature>
<feature type="binding site" evidence="1">
    <location>
        <begin position="115"/>
        <end position="116"/>
    </location>
    <ligand>
        <name>substrate</name>
    </ligand>
</feature>
<protein>
    <recommendedName>
        <fullName evidence="1">Cyclic pyranopterin monophosphate synthase</fullName>
        <ecNumber evidence="1">4.6.1.17</ecNumber>
    </recommendedName>
    <alternativeName>
        <fullName evidence="1">Molybdenum cofactor biosynthesis protein C</fullName>
    </alternativeName>
</protein>
<evidence type="ECO:0000255" key="1">
    <source>
        <dbReference type="HAMAP-Rule" id="MF_01224"/>
    </source>
</evidence>